<gene>
    <name evidence="1" type="primary">rpl37ae</name>
    <name type="ordered locus">TSIB_1345</name>
</gene>
<feature type="chain" id="PRO_1000205167" description="Large ribosomal subunit protein eL43">
    <location>
        <begin position="1"/>
        <end position="85"/>
    </location>
</feature>
<feature type="zinc finger region" description="C4-type" evidence="1">
    <location>
        <begin position="38"/>
        <end position="59"/>
    </location>
</feature>
<evidence type="ECO:0000255" key="1">
    <source>
        <dbReference type="HAMAP-Rule" id="MF_00327"/>
    </source>
</evidence>
<evidence type="ECO:0000305" key="2"/>
<accession>C6A452</accession>
<organism>
    <name type="scientific">Thermococcus sibiricus (strain DSM 12597 / MM 739)</name>
    <dbReference type="NCBI Taxonomy" id="604354"/>
    <lineage>
        <taxon>Archaea</taxon>
        <taxon>Methanobacteriati</taxon>
        <taxon>Methanobacteriota</taxon>
        <taxon>Thermococci</taxon>
        <taxon>Thermococcales</taxon>
        <taxon>Thermococcaceae</taxon>
        <taxon>Thermococcus</taxon>
    </lineage>
</organism>
<sequence>MPRTKKVGSAGRFGPRYGLKIRRRVAAVEEKMRQKHTCPVCGRKAVRRISTGIWQCQKCGATFAGGAYLPATPAGRIAKRGISSP</sequence>
<reference key="1">
    <citation type="journal article" date="2009" name="Appl. Environ. Microbiol.">
        <title>Metabolic versatility and indigenous origin of the archaeon Thermococcus sibiricus, isolated from a siberian oil reservoir, as revealed by genome analysis.</title>
        <authorList>
            <person name="Mardanov A.V."/>
            <person name="Ravin N.V."/>
            <person name="Svetlitchnyi V.A."/>
            <person name="Beletsky A.V."/>
            <person name="Miroshnichenko M.L."/>
            <person name="Bonch-Osmolovskaya E.A."/>
            <person name="Skryabin K.G."/>
        </authorList>
    </citation>
    <scope>NUCLEOTIDE SEQUENCE [LARGE SCALE GENOMIC DNA]</scope>
    <source>
        <strain>DSM 12597 / MM 739</strain>
    </source>
</reference>
<name>RL37A_THESM</name>
<proteinExistence type="inferred from homology"/>
<dbReference type="EMBL" id="CP001463">
    <property type="protein sequence ID" value="ACS90397.1"/>
    <property type="molecule type" value="Genomic_DNA"/>
</dbReference>
<dbReference type="RefSeq" id="WP_015849615.1">
    <property type="nucleotide sequence ID" value="NC_012883.1"/>
</dbReference>
<dbReference type="SMR" id="C6A452"/>
<dbReference type="STRING" id="604354.TSIB_1345"/>
<dbReference type="GeneID" id="8096346"/>
<dbReference type="KEGG" id="tsi:TSIB_1345"/>
<dbReference type="eggNOG" id="arCOG04208">
    <property type="taxonomic scope" value="Archaea"/>
</dbReference>
<dbReference type="HOGENOM" id="CLU_141199_2_0_2"/>
<dbReference type="OrthoDB" id="372011at2157"/>
<dbReference type="Proteomes" id="UP000009079">
    <property type="component" value="Chromosome"/>
</dbReference>
<dbReference type="GO" id="GO:1990904">
    <property type="term" value="C:ribonucleoprotein complex"/>
    <property type="evidence" value="ECO:0007669"/>
    <property type="project" value="UniProtKB-KW"/>
</dbReference>
<dbReference type="GO" id="GO:0005840">
    <property type="term" value="C:ribosome"/>
    <property type="evidence" value="ECO:0007669"/>
    <property type="project" value="UniProtKB-KW"/>
</dbReference>
<dbReference type="GO" id="GO:0070180">
    <property type="term" value="F:large ribosomal subunit rRNA binding"/>
    <property type="evidence" value="ECO:0007669"/>
    <property type="project" value="UniProtKB-UniRule"/>
</dbReference>
<dbReference type="GO" id="GO:0003735">
    <property type="term" value="F:structural constituent of ribosome"/>
    <property type="evidence" value="ECO:0007669"/>
    <property type="project" value="InterPro"/>
</dbReference>
<dbReference type="GO" id="GO:0008270">
    <property type="term" value="F:zinc ion binding"/>
    <property type="evidence" value="ECO:0007669"/>
    <property type="project" value="UniProtKB-UniRule"/>
</dbReference>
<dbReference type="GO" id="GO:0006412">
    <property type="term" value="P:translation"/>
    <property type="evidence" value="ECO:0007669"/>
    <property type="project" value="UniProtKB-UniRule"/>
</dbReference>
<dbReference type="Gene3D" id="2.20.25.30">
    <property type="match status" value="1"/>
</dbReference>
<dbReference type="HAMAP" id="MF_00327">
    <property type="entry name" value="Ribosomal_eL43"/>
    <property type="match status" value="1"/>
</dbReference>
<dbReference type="InterPro" id="IPR011331">
    <property type="entry name" value="Ribosomal_eL37/eL43"/>
</dbReference>
<dbReference type="InterPro" id="IPR002674">
    <property type="entry name" value="Ribosomal_eL43"/>
</dbReference>
<dbReference type="InterPro" id="IPR050522">
    <property type="entry name" value="Ribosomal_protein_eL43"/>
</dbReference>
<dbReference type="InterPro" id="IPR011332">
    <property type="entry name" value="Ribosomal_zn-bd"/>
</dbReference>
<dbReference type="NCBIfam" id="TIGR00280">
    <property type="entry name" value="eL43_euk_arch"/>
    <property type="match status" value="1"/>
</dbReference>
<dbReference type="NCBIfam" id="NF003058">
    <property type="entry name" value="PRK03976.1"/>
    <property type="match status" value="1"/>
</dbReference>
<dbReference type="PANTHER" id="PTHR48129">
    <property type="entry name" value="60S RIBOSOMAL PROTEIN L37A"/>
    <property type="match status" value="1"/>
</dbReference>
<dbReference type="PANTHER" id="PTHR48129:SF1">
    <property type="entry name" value="LARGE RIBOSOMAL SUBUNIT PROTEIN EL43"/>
    <property type="match status" value="1"/>
</dbReference>
<dbReference type="Pfam" id="PF01780">
    <property type="entry name" value="Ribosomal_L37ae"/>
    <property type="match status" value="1"/>
</dbReference>
<dbReference type="SUPFAM" id="SSF57829">
    <property type="entry name" value="Zn-binding ribosomal proteins"/>
    <property type="match status" value="1"/>
</dbReference>
<protein>
    <recommendedName>
        <fullName evidence="1">Large ribosomal subunit protein eL43</fullName>
    </recommendedName>
    <alternativeName>
        <fullName evidence="2">50S ribosomal protein L37Ae</fullName>
    </alternativeName>
    <alternativeName>
        <fullName evidence="1">Ribosomal protein L43e</fullName>
    </alternativeName>
</protein>
<comment type="cofactor">
    <cofactor evidence="1">
        <name>Zn(2+)</name>
        <dbReference type="ChEBI" id="CHEBI:29105"/>
    </cofactor>
    <text evidence="1">Binds 1 zinc ion per subunit.</text>
</comment>
<comment type="similarity">
    <text evidence="1">Belongs to the eukaryotic ribosomal protein eL43 family.</text>
</comment>
<keyword id="KW-0479">Metal-binding</keyword>
<keyword id="KW-1185">Reference proteome</keyword>
<keyword id="KW-0687">Ribonucleoprotein</keyword>
<keyword id="KW-0689">Ribosomal protein</keyword>
<keyword id="KW-0694">RNA-binding</keyword>
<keyword id="KW-0862">Zinc</keyword>
<keyword id="KW-0863">Zinc-finger</keyword>